<protein>
    <recommendedName>
        <fullName evidence="1">Small ribosomal subunit protein uS8</fullName>
    </recommendedName>
    <alternativeName>
        <fullName evidence="2">30S ribosomal protein S8</fullName>
    </alternativeName>
</protein>
<gene>
    <name evidence="1" type="primary">rpsH</name>
    <name type="ordered locus">BAB1_1241</name>
</gene>
<name>RS8_BRUA2</name>
<feature type="chain" id="PRO_0000228861" description="Small ribosomal subunit protein uS8">
    <location>
        <begin position="1"/>
        <end position="132"/>
    </location>
</feature>
<organism>
    <name type="scientific">Brucella abortus (strain 2308)</name>
    <dbReference type="NCBI Taxonomy" id="359391"/>
    <lineage>
        <taxon>Bacteria</taxon>
        <taxon>Pseudomonadati</taxon>
        <taxon>Pseudomonadota</taxon>
        <taxon>Alphaproteobacteria</taxon>
        <taxon>Hyphomicrobiales</taxon>
        <taxon>Brucellaceae</taxon>
        <taxon>Brucella/Ochrobactrum group</taxon>
        <taxon>Brucella</taxon>
    </lineage>
</organism>
<proteinExistence type="inferred from homology"/>
<comment type="function">
    <text evidence="1">One of the primary rRNA binding proteins, it binds directly to 16S rRNA central domain where it helps coordinate assembly of the platform of the 30S subunit.</text>
</comment>
<comment type="subunit">
    <text evidence="1">Part of the 30S ribosomal subunit. Contacts proteins S5 and S12.</text>
</comment>
<comment type="similarity">
    <text evidence="1">Belongs to the universal ribosomal protein uS8 family.</text>
</comment>
<sequence length="132" mass="14618">MSVSDPLGDMLTRIRNAVGRKKTKVSTPASKLRARVLDVLQAEGYIRAYTQSEFENGKAEIEIELKYYEGVPVIREITRVSKPGRRVYVSVKSIPQVANGLGISILSTPKGVMADHEAREQNVGGELLCRIF</sequence>
<dbReference type="EMBL" id="AM040264">
    <property type="protein sequence ID" value="CAJ11197.1"/>
    <property type="molecule type" value="Genomic_DNA"/>
</dbReference>
<dbReference type="RefSeq" id="WP_002964348.1">
    <property type="nucleotide sequence ID" value="NZ_KN046823.1"/>
</dbReference>
<dbReference type="SMR" id="Q2YRA9"/>
<dbReference type="STRING" id="359391.BAB1_1241"/>
<dbReference type="GeneID" id="93016453"/>
<dbReference type="KEGG" id="bmf:BAB1_1241"/>
<dbReference type="PATRIC" id="fig|359391.11.peg.141"/>
<dbReference type="HOGENOM" id="CLU_098428_0_0_5"/>
<dbReference type="Proteomes" id="UP000002719">
    <property type="component" value="Chromosome I"/>
</dbReference>
<dbReference type="GO" id="GO:1990904">
    <property type="term" value="C:ribonucleoprotein complex"/>
    <property type="evidence" value="ECO:0007669"/>
    <property type="project" value="UniProtKB-KW"/>
</dbReference>
<dbReference type="GO" id="GO:0005840">
    <property type="term" value="C:ribosome"/>
    <property type="evidence" value="ECO:0007669"/>
    <property type="project" value="UniProtKB-KW"/>
</dbReference>
<dbReference type="GO" id="GO:0019843">
    <property type="term" value="F:rRNA binding"/>
    <property type="evidence" value="ECO:0007669"/>
    <property type="project" value="UniProtKB-UniRule"/>
</dbReference>
<dbReference type="GO" id="GO:0003735">
    <property type="term" value="F:structural constituent of ribosome"/>
    <property type="evidence" value="ECO:0007669"/>
    <property type="project" value="InterPro"/>
</dbReference>
<dbReference type="GO" id="GO:0006412">
    <property type="term" value="P:translation"/>
    <property type="evidence" value="ECO:0007669"/>
    <property type="project" value="UniProtKB-UniRule"/>
</dbReference>
<dbReference type="FunFam" id="3.30.1490.10:FF:000001">
    <property type="entry name" value="30S ribosomal protein S8"/>
    <property type="match status" value="1"/>
</dbReference>
<dbReference type="Gene3D" id="3.30.1370.30">
    <property type="match status" value="1"/>
</dbReference>
<dbReference type="Gene3D" id="3.30.1490.10">
    <property type="match status" value="1"/>
</dbReference>
<dbReference type="HAMAP" id="MF_01302_B">
    <property type="entry name" value="Ribosomal_uS8_B"/>
    <property type="match status" value="1"/>
</dbReference>
<dbReference type="InterPro" id="IPR000630">
    <property type="entry name" value="Ribosomal_uS8"/>
</dbReference>
<dbReference type="InterPro" id="IPR047863">
    <property type="entry name" value="Ribosomal_uS8_CS"/>
</dbReference>
<dbReference type="InterPro" id="IPR035987">
    <property type="entry name" value="Ribosomal_uS8_sf"/>
</dbReference>
<dbReference type="NCBIfam" id="NF001109">
    <property type="entry name" value="PRK00136.1"/>
    <property type="match status" value="1"/>
</dbReference>
<dbReference type="PANTHER" id="PTHR11758">
    <property type="entry name" value="40S RIBOSOMAL PROTEIN S15A"/>
    <property type="match status" value="1"/>
</dbReference>
<dbReference type="Pfam" id="PF00410">
    <property type="entry name" value="Ribosomal_S8"/>
    <property type="match status" value="1"/>
</dbReference>
<dbReference type="SUPFAM" id="SSF56047">
    <property type="entry name" value="Ribosomal protein S8"/>
    <property type="match status" value="1"/>
</dbReference>
<dbReference type="PROSITE" id="PS00053">
    <property type="entry name" value="RIBOSOMAL_S8"/>
    <property type="match status" value="1"/>
</dbReference>
<keyword id="KW-1185">Reference proteome</keyword>
<keyword id="KW-0687">Ribonucleoprotein</keyword>
<keyword id="KW-0689">Ribosomal protein</keyword>
<keyword id="KW-0694">RNA-binding</keyword>
<keyword id="KW-0699">rRNA-binding</keyword>
<evidence type="ECO:0000255" key="1">
    <source>
        <dbReference type="HAMAP-Rule" id="MF_01302"/>
    </source>
</evidence>
<evidence type="ECO:0000305" key="2"/>
<reference key="1">
    <citation type="journal article" date="2005" name="Infect. Immun.">
        <title>Whole-genome analyses of speciation events in pathogenic Brucellae.</title>
        <authorList>
            <person name="Chain P.S."/>
            <person name="Comerci D.J."/>
            <person name="Tolmasky M.E."/>
            <person name="Larimer F.W."/>
            <person name="Malfatti S.A."/>
            <person name="Vergez L.M."/>
            <person name="Aguero F."/>
            <person name="Land M.L."/>
            <person name="Ugalde R.A."/>
            <person name="Garcia E."/>
        </authorList>
    </citation>
    <scope>NUCLEOTIDE SEQUENCE [LARGE SCALE GENOMIC DNA]</scope>
    <source>
        <strain>2308</strain>
    </source>
</reference>
<accession>Q2YRA9</accession>